<keyword id="KW-1185">Reference proteome</keyword>
<sequence>MSLAIVHTRAALGVNAPPITIEVHISNGLPGLTMVGLPETTVKEARDRVRSAIINSGYEFPAKKITINLAPADLPKEGGRYDLPIAVALLAASEQLTASNLEAYELVGELALTGALRGVPGAISSATEAIRAGRNIIVATENAAEVGLISKEGCFIADHLQTVCAFLEGKHALERPLAQDMASPTATADLRDVIGQEQGKRGLEITAAGGHNLLLIGPPGTGKTMLASRLSGILPPLSNEEALESAAILSLVNADTVQKRWQQRPFRSPHHSASLTAMVGGGAIPAPGEISLAHNGILFLDELPEFERRTLDALREPIESGQIHLSRTRAKITYPARFQLIAAMNPSPTGHYQGNHNRCTPEQTLRYLNRLSGPFLDRFDLSLEIPLPPPGILSQHASKGESSATVKKRVIAAHERQYRRQKKLNARLEGREIQKYCVLHHDDARWLEDTLVHLGLSIRAWQRLLKVARTIADIELADQISRQHLQEAVSYRAIDRLLIHLQKLLA</sequence>
<feature type="chain" id="PRO_0000206878" description="Uncharacterized protein YifB">
    <location>
        <begin position="1"/>
        <end position="506"/>
    </location>
</feature>
<gene>
    <name type="primary">yifB</name>
    <name type="ordered locus">STM3899</name>
    <name type="ORF">STMD1.95</name>
</gene>
<organism>
    <name type="scientific">Salmonella typhimurium (strain LT2 / SGSC1412 / ATCC 700720)</name>
    <dbReference type="NCBI Taxonomy" id="99287"/>
    <lineage>
        <taxon>Bacteria</taxon>
        <taxon>Pseudomonadati</taxon>
        <taxon>Pseudomonadota</taxon>
        <taxon>Gammaproteobacteria</taxon>
        <taxon>Enterobacterales</taxon>
        <taxon>Enterobacteriaceae</taxon>
        <taxon>Salmonella</taxon>
    </lineage>
</organism>
<dbReference type="EMBL" id="AF233324">
    <property type="protein sequence ID" value="AAF33484.1"/>
    <property type="molecule type" value="Genomic_DNA"/>
</dbReference>
<dbReference type="EMBL" id="AE006468">
    <property type="protein sequence ID" value="AAL22749.1"/>
    <property type="molecule type" value="Genomic_DNA"/>
</dbReference>
<dbReference type="RefSeq" id="NP_462790.1">
    <property type="nucleotide sequence ID" value="NC_003197.2"/>
</dbReference>
<dbReference type="RefSeq" id="WP_000050215.1">
    <property type="nucleotide sequence ID" value="NC_003197.2"/>
</dbReference>
<dbReference type="SMR" id="P57015"/>
<dbReference type="STRING" id="99287.STM3899"/>
<dbReference type="PaxDb" id="99287-STM3899"/>
<dbReference type="GeneID" id="1255425"/>
<dbReference type="KEGG" id="stm:STM3899"/>
<dbReference type="PATRIC" id="fig|99287.12.peg.4121"/>
<dbReference type="HOGENOM" id="CLU_026145_1_1_6"/>
<dbReference type="OMA" id="WFAFGEL"/>
<dbReference type="PhylomeDB" id="P57015"/>
<dbReference type="BioCyc" id="SENT99287:STM3899-MONOMER"/>
<dbReference type="Proteomes" id="UP000001014">
    <property type="component" value="Chromosome"/>
</dbReference>
<dbReference type="GO" id="GO:0005524">
    <property type="term" value="F:ATP binding"/>
    <property type="evidence" value="ECO:0007669"/>
    <property type="project" value="InterPro"/>
</dbReference>
<dbReference type="GO" id="GO:0016887">
    <property type="term" value="F:ATP hydrolysis activity"/>
    <property type="evidence" value="ECO:0007669"/>
    <property type="project" value="InterPro"/>
</dbReference>
<dbReference type="FunFam" id="3.40.50.300:FF:001404">
    <property type="entry name" value="Magnesium chelatase family protein"/>
    <property type="match status" value="1"/>
</dbReference>
<dbReference type="Gene3D" id="3.30.230.10">
    <property type="match status" value="1"/>
</dbReference>
<dbReference type="Gene3D" id="3.40.50.300">
    <property type="entry name" value="P-loop containing nucleotide triphosphate hydrolases"/>
    <property type="match status" value="1"/>
</dbReference>
<dbReference type="InterPro" id="IPR003593">
    <property type="entry name" value="AAA+_ATPase"/>
</dbReference>
<dbReference type="InterPro" id="IPR045006">
    <property type="entry name" value="CHLI-like"/>
</dbReference>
<dbReference type="InterPro" id="IPR004482">
    <property type="entry name" value="Mg_chelat-rel"/>
</dbReference>
<dbReference type="InterPro" id="IPR025158">
    <property type="entry name" value="Mg_chelat-rel_C"/>
</dbReference>
<dbReference type="InterPro" id="IPR000523">
    <property type="entry name" value="Mg_chelatse_chII-like_cat_dom"/>
</dbReference>
<dbReference type="InterPro" id="IPR027417">
    <property type="entry name" value="P-loop_NTPase"/>
</dbReference>
<dbReference type="InterPro" id="IPR020568">
    <property type="entry name" value="Ribosomal_Su5_D2-typ_SF"/>
</dbReference>
<dbReference type="InterPro" id="IPR014721">
    <property type="entry name" value="Ribsml_uS5_D2-typ_fold_subgr"/>
</dbReference>
<dbReference type="InterPro" id="IPR025943">
    <property type="entry name" value="Sigma_54_int_dom_ATP-bd_2"/>
</dbReference>
<dbReference type="NCBIfam" id="NF007365">
    <property type="entry name" value="PRK09862.1"/>
    <property type="match status" value="1"/>
</dbReference>
<dbReference type="NCBIfam" id="TIGR00368">
    <property type="entry name" value="YifB family Mg chelatase-like AAA ATPase"/>
    <property type="match status" value="1"/>
</dbReference>
<dbReference type="PANTHER" id="PTHR32039:SF7">
    <property type="entry name" value="COMPETENCE PROTEIN COMM"/>
    <property type="match status" value="1"/>
</dbReference>
<dbReference type="PANTHER" id="PTHR32039">
    <property type="entry name" value="MAGNESIUM-CHELATASE SUBUNIT CHLI"/>
    <property type="match status" value="1"/>
</dbReference>
<dbReference type="Pfam" id="PF13541">
    <property type="entry name" value="ChlI"/>
    <property type="match status" value="1"/>
</dbReference>
<dbReference type="Pfam" id="PF01078">
    <property type="entry name" value="Mg_chelatase"/>
    <property type="match status" value="1"/>
</dbReference>
<dbReference type="Pfam" id="PF13335">
    <property type="entry name" value="Mg_chelatase_C"/>
    <property type="match status" value="1"/>
</dbReference>
<dbReference type="SMART" id="SM00382">
    <property type="entry name" value="AAA"/>
    <property type="match status" value="1"/>
</dbReference>
<dbReference type="SUPFAM" id="SSF52540">
    <property type="entry name" value="P-loop containing nucleoside triphosphate hydrolases"/>
    <property type="match status" value="1"/>
</dbReference>
<dbReference type="SUPFAM" id="SSF54211">
    <property type="entry name" value="Ribosomal protein S5 domain 2-like"/>
    <property type="match status" value="1"/>
</dbReference>
<evidence type="ECO:0000305" key="1"/>
<comment type="similarity">
    <text evidence="1">Belongs to the Mg-chelatase subunits D/I family. ComM subfamily.</text>
</comment>
<name>YIFB_SALTY</name>
<protein>
    <recommendedName>
        <fullName>Uncharacterized protein YifB</fullName>
    </recommendedName>
</protein>
<accession>P57015</accession>
<reference key="1">
    <citation type="journal article" date="2001" name="Nature">
        <title>Complete genome sequence of Salmonella enterica serovar Typhimurium LT2.</title>
        <authorList>
            <person name="McClelland M."/>
            <person name="Sanderson K.E."/>
            <person name="Spieth J."/>
            <person name="Clifton S.W."/>
            <person name="Latreille P."/>
            <person name="Courtney L."/>
            <person name="Porwollik S."/>
            <person name="Ali J."/>
            <person name="Dante M."/>
            <person name="Du F."/>
            <person name="Hou S."/>
            <person name="Layman D."/>
            <person name="Leonard S."/>
            <person name="Nguyen C."/>
            <person name="Scott K."/>
            <person name="Holmes A."/>
            <person name="Grewal N."/>
            <person name="Mulvaney E."/>
            <person name="Ryan E."/>
            <person name="Sun H."/>
            <person name="Florea L."/>
            <person name="Miller W."/>
            <person name="Stoneking T."/>
            <person name="Nhan M."/>
            <person name="Waterston R."/>
            <person name="Wilson R.K."/>
        </authorList>
    </citation>
    <scope>NUCLEOTIDE SEQUENCE [LARGE SCALE GENOMIC DNA]</scope>
    <source>
        <strain>LT2 / SGSC1412 / ATCC 700720</strain>
    </source>
</reference>
<proteinExistence type="inferred from homology"/>